<dbReference type="EC" id="2.7.7.6" evidence="1"/>
<dbReference type="EMBL" id="EU118126">
    <property type="protein sequence ID" value="ABV02339.1"/>
    <property type="molecule type" value="Genomic_DNA"/>
</dbReference>
<dbReference type="RefSeq" id="YP_001468299.1">
    <property type="nucleotide sequence ID" value="NC_009808.1"/>
</dbReference>
<dbReference type="SMR" id="A7Y3B6"/>
<dbReference type="GeneID" id="5601233"/>
<dbReference type="GO" id="GO:0009507">
    <property type="term" value="C:chloroplast"/>
    <property type="evidence" value="ECO:0007669"/>
    <property type="project" value="UniProtKB-SubCell"/>
</dbReference>
<dbReference type="GO" id="GO:0000428">
    <property type="term" value="C:DNA-directed RNA polymerase complex"/>
    <property type="evidence" value="ECO:0007669"/>
    <property type="project" value="UniProtKB-KW"/>
</dbReference>
<dbReference type="GO" id="GO:0005739">
    <property type="term" value="C:mitochondrion"/>
    <property type="evidence" value="ECO:0007669"/>
    <property type="project" value="GOC"/>
</dbReference>
<dbReference type="GO" id="GO:0003677">
    <property type="term" value="F:DNA binding"/>
    <property type="evidence" value="ECO:0007669"/>
    <property type="project" value="UniProtKB-UniRule"/>
</dbReference>
<dbReference type="GO" id="GO:0003899">
    <property type="term" value="F:DNA-directed RNA polymerase activity"/>
    <property type="evidence" value="ECO:0007669"/>
    <property type="project" value="UniProtKB-UniRule"/>
</dbReference>
<dbReference type="GO" id="GO:0000287">
    <property type="term" value="F:magnesium ion binding"/>
    <property type="evidence" value="ECO:0007669"/>
    <property type="project" value="UniProtKB-UniRule"/>
</dbReference>
<dbReference type="GO" id="GO:0008270">
    <property type="term" value="F:zinc ion binding"/>
    <property type="evidence" value="ECO:0007669"/>
    <property type="project" value="UniProtKB-UniRule"/>
</dbReference>
<dbReference type="GO" id="GO:0006351">
    <property type="term" value="P:DNA-templated transcription"/>
    <property type="evidence" value="ECO:0007669"/>
    <property type="project" value="UniProtKB-UniRule"/>
</dbReference>
<dbReference type="FunFam" id="1.10.40.90:FF:000002">
    <property type="entry name" value="DNA-directed RNA polymerase subunit"/>
    <property type="match status" value="1"/>
</dbReference>
<dbReference type="FunFam" id="4.10.860.120:FF:000007">
    <property type="entry name" value="DNA-directed RNA polymerase subunit gamma"/>
    <property type="match status" value="1"/>
</dbReference>
<dbReference type="Gene3D" id="1.10.40.90">
    <property type="match status" value="1"/>
</dbReference>
<dbReference type="Gene3D" id="2.40.40.20">
    <property type="match status" value="1"/>
</dbReference>
<dbReference type="Gene3D" id="4.10.860.120">
    <property type="entry name" value="RNA polymerase II, clamp domain"/>
    <property type="match status" value="1"/>
</dbReference>
<dbReference type="Gene3D" id="1.10.274.100">
    <property type="entry name" value="RNA polymerase Rpb1, domain 3"/>
    <property type="match status" value="1"/>
</dbReference>
<dbReference type="HAMAP" id="MF_01323">
    <property type="entry name" value="RNApol_bact_RpoC1"/>
    <property type="match status" value="1"/>
</dbReference>
<dbReference type="InterPro" id="IPR045867">
    <property type="entry name" value="DNA-dir_RpoC_beta_prime"/>
</dbReference>
<dbReference type="InterPro" id="IPR000722">
    <property type="entry name" value="RNA_pol_asu"/>
</dbReference>
<dbReference type="InterPro" id="IPR006592">
    <property type="entry name" value="RNA_pol_N"/>
</dbReference>
<dbReference type="InterPro" id="IPR007080">
    <property type="entry name" value="RNA_pol_Rpb1_1"/>
</dbReference>
<dbReference type="InterPro" id="IPR007066">
    <property type="entry name" value="RNA_pol_Rpb1_3"/>
</dbReference>
<dbReference type="InterPro" id="IPR042102">
    <property type="entry name" value="RNA_pol_Rpb1_3_sf"/>
</dbReference>
<dbReference type="InterPro" id="IPR044893">
    <property type="entry name" value="RNA_pol_Rpb1_clamp_domain"/>
</dbReference>
<dbReference type="InterPro" id="IPR034678">
    <property type="entry name" value="RNApol_RpoC1"/>
</dbReference>
<dbReference type="PANTHER" id="PTHR19376">
    <property type="entry name" value="DNA-DIRECTED RNA POLYMERASE"/>
    <property type="match status" value="1"/>
</dbReference>
<dbReference type="PANTHER" id="PTHR19376:SF54">
    <property type="entry name" value="DNA-DIRECTED RNA POLYMERASE SUBUNIT BETA"/>
    <property type="match status" value="1"/>
</dbReference>
<dbReference type="Pfam" id="PF04997">
    <property type="entry name" value="RNA_pol_Rpb1_1"/>
    <property type="match status" value="1"/>
</dbReference>
<dbReference type="Pfam" id="PF00623">
    <property type="entry name" value="RNA_pol_Rpb1_2"/>
    <property type="match status" value="2"/>
</dbReference>
<dbReference type="Pfam" id="PF04983">
    <property type="entry name" value="RNA_pol_Rpb1_3"/>
    <property type="match status" value="1"/>
</dbReference>
<dbReference type="SMART" id="SM00663">
    <property type="entry name" value="RPOLA_N"/>
    <property type="match status" value="1"/>
</dbReference>
<dbReference type="SUPFAM" id="SSF64484">
    <property type="entry name" value="beta and beta-prime subunits of DNA dependent RNA-polymerase"/>
    <property type="match status" value="1"/>
</dbReference>
<feature type="chain" id="PRO_0000353494" description="DNA-directed RNA polymerase subunit beta'">
    <location>
        <begin position="1"/>
        <end position="687"/>
    </location>
</feature>
<feature type="binding site" evidence="1">
    <location>
        <position position="76"/>
    </location>
    <ligand>
        <name>Zn(2+)</name>
        <dbReference type="ChEBI" id="CHEBI:29105"/>
    </ligand>
</feature>
<feature type="binding site" evidence="1">
    <location>
        <position position="78"/>
    </location>
    <ligand>
        <name>Zn(2+)</name>
        <dbReference type="ChEBI" id="CHEBI:29105"/>
    </ligand>
</feature>
<feature type="binding site" evidence="1">
    <location>
        <position position="94"/>
    </location>
    <ligand>
        <name>Zn(2+)</name>
        <dbReference type="ChEBI" id="CHEBI:29105"/>
    </ligand>
</feature>
<feature type="binding site" evidence="1">
    <location>
        <position position="97"/>
    </location>
    <ligand>
        <name>Zn(2+)</name>
        <dbReference type="ChEBI" id="CHEBI:29105"/>
    </ligand>
</feature>
<feature type="binding site" evidence="1">
    <location>
        <position position="496"/>
    </location>
    <ligand>
        <name>Mg(2+)</name>
        <dbReference type="ChEBI" id="CHEBI:18420"/>
    </ligand>
</feature>
<feature type="binding site" evidence="1">
    <location>
        <position position="498"/>
    </location>
    <ligand>
        <name>Mg(2+)</name>
        <dbReference type="ChEBI" id="CHEBI:18420"/>
    </ligand>
</feature>
<feature type="binding site" evidence="1">
    <location>
        <position position="500"/>
    </location>
    <ligand>
        <name>Mg(2+)</name>
        <dbReference type="ChEBI" id="CHEBI:18420"/>
    </ligand>
</feature>
<keyword id="KW-0150">Chloroplast</keyword>
<keyword id="KW-0240">DNA-directed RNA polymerase</keyword>
<keyword id="KW-0460">Magnesium</keyword>
<keyword id="KW-0479">Metal-binding</keyword>
<keyword id="KW-0548">Nucleotidyltransferase</keyword>
<keyword id="KW-0934">Plastid</keyword>
<keyword id="KW-0804">Transcription</keyword>
<keyword id="KW-0808">Transferase</keyword>
<keyword id="KW-0862">Zinc</keyword>
<sequence length="687" mass="79297">MNPNFSSMIDRYKHQQLRIGSVSPQQISAWATKILPNGEIVGEVKKPYTFLYKTNKPEKDGLFCERIFGPIKSGICACGNYRVIGDEKEEPKFCEQCGVEFIDSRIRRYQMGYIKLACPVTHVWYLKRLPSYIANLLDKPLKELEGLVYCDFSFARPITKKPTFLRLRGLFEYEIQSWKYSIPLFFTTQGFDTFRNREISTGAGAIREQLADLDLRIIIENSLLEWKDLGEEEHTGNEWEDRKVGRRKDFLVRRMELAKHFLRTNIEPEWMVLCLLPVLPPELRPIIQIDGGKLMSSDINELYRRVIYRNNTLTDLLTTSRSTPGELVMCQEKLVQEAVDTLLDNGIRGQPMRDGHNKIYKSFSDLIEGKEGRFRETLLGKRVDYSGRSVIVVGPSLSLHRCGLPREIAIELFQTFVIRGLIRQHLASNIGVAKSKIREKEPIVWEILQEVMQGHPVLLNRAPTLHRLGIQAFQPVLVEGRAICLHPLVCKGFNADFDGDQMAVHVPLSLEAQVEARLLMFSHMNLLSPAIGDPISVPTQDMLIGLYVLTSENRRGICLNRYTKCNRRNSQTKRSDNSNYKYKKEPVFCNSYDAIGAYRQKRINLDSPLWLRWRLDQRVITSRETPIEVHYESLGTYYEIYGHYLIVRSLKKEIIFIYIRTTVGHISLYREIEEAIQGFSRAGSSDT</sequence>
<proteinExistence type="inferred from homology"/>
<protein>
    <recommendedName>
        <fullName evidence="1">DNA-directed RNA polymerase subunit beta'</fullName>
        <ecNumber evidence="1">2.7.7.6</ecNumber>
    </recommendedName>
    <alternativeName>
        <fullName evidence="1">PEP</fullName>
    </alternativeName>
    <alternativeName>
        <fullName evidence="1">Plastid-encoded RNA polymerase subunit beta'</fullName>
        <shortName evidence="1">RNA polymerase subunit beta'</shortName>
    </alternativeName>
</protein>
<organism>
    <name type="scientific">Ipomoea purpurea</name>
    <name type="common">Common morning glory</name>
    <name type="synonym">Pharbitis purpurea</name>
    <dbReference type="NCBI Taxonomy" id="4121"/>
    <lineage>
        <taxon>Eukaryota</taxon>
        <taxon>Viridiplantae</taxon>
        <taxon>Streptophyta</taxon>
        <taxon>Embryophyta</taxon>
        <taxon>Tracheophyta</taxon>
        <taxon>Spermatophyta</taxon>
        <taxon>Magnoliopsida</taxon>
        <taxon>eudicotyledons</taxon>
        <taxon>Gunneridae</taxon>
        <taxon>Pentapetalae</taxon>
        <taxon>asterids</taxon>
        <taxon>lamiids</taxon>
        <taxon>Solanales</taxon>
        <taxon>Convolvulaceae</taxon>
        <taxon>Ipomoeeae</taxon>
        <taxon>Ipomoea</taxon>
    </lineage>
</organism>
<gene>
    <name evidence="1" type="primary">rpoC1</name>
</gene>
<accession>A7Y3B6</accession>
<name>RPOC1_IPOPU</name>
<reference key="1">
    <citation type="journal article" date="2007" name="BMC Plant Biol.">
        <title>Complete plastid genome sequences suggest strong selection for retention of photosynthetic genes in the parasitic plant genus Cuscuta.</title>
        <authorList>
            <person name="McNeal J.R."/>
            <person name="Kuehl J.V."/>
            <person name="Boore J.L."/>
            <person name="dePamphilis C.W."/>
        </authorList>
    </citation>
    <scope>NUCLEOTIDE SEQUENCE [LARGE SCALE GENOMIC DNA]</scope>
</reference>
<geneLocation type="chloroplast"/>
<evidence type="ECO:0000255" key="1">
    <source>
        <dbReference type="HAMAP-Rule" id="MF_01323"/>
    </source>
</evidence>
<comment type="function">
    <text evidence="1">DNA-dependent RNA polymerase catalyzes the transcription of DNA into RNA using the four ribonucleoside triphosphates as substrates.</text>
</comment>
<comment type="catalytic activity">
    <reaction evidence="1">
        <text>RNA(n) + a ribonucleoside 5'-triphosphate = RNA(n+1) + diphosphate</text>
        <dbReference type="Rhea" id="RHEA:21248"/>
        <dbReference type="Rhea" id="RHEA-COMP:14527"/>
        <dbReference type="Rhea" id="RHEA-COMP:17342"/>
        <dbReference type="ChEBI" id="CHEBI:33019"/>
        <dbReference type="ChEBI" id="CHEBI:61557"/>
        <dbReference type="ChEBI" id="CHEBI:140395"/>
        <dbReference type="EC" id="2.7.7.6"/>
    </reaction>
</comment>
<comment type="cofactor">
    <cofactor evidence="1">
        <name>Mg(2+)</name>
        <dbReference type="ChEBI" id="CHEBI:18420"/>
    </cofactor>
    <text evidence="1">Binds 1 Mg(2+) ion per subunit.</text>
</comment>
<comment type="cofactor">
    <cofactor evidence="1">
        <name>Zn(2+)</name>
        <dbReference type="ChEBI" id="CHEBI:29105"/>
    </cofactor>
    <text evidence="1">Binds 1 Zn(2+) ion per subunit.</text>
</comment>
<comment type="subunit">
    <text evidence="1">In plastids the minimal PEP RNA polymerase catalytic core is composed of four subunits: alpha, beta, beta', and beta''. When a (nuclear-encoded) sigma factor is associated with the core the holoenzyme is formed, which can initiate transcription.</text>
</comment>
<comment type="subcellular location">
    <subcellularLocation>
        <location evidence="1">Plastid</location>
        <location evidence="1">Chloroplast</location>
    </subcellularLocation>
</comment>
<comment type="similarity">
    <text evidence="1">Belongs to the RNA polymerase beta' chain family. RpoC1 subfamily.</text>
</comment>